<accession>Q92H75</accession>
<feature type="chain" id="PRO_0000238855" description="Cytochrome c-type biogenesis protein CcmE">
    <location>
        <begin position="1"/>
        <end position="128"/>
    </location>
</feature>
<feature type="topological domain" description="Cytoplasmic" evidence="1">
    <location>
        <begin position="1"/>
        <end position="8"/>
    </location>
</feature>
<feature type="transmembrane region" description="Helical; Signal-anchor for type II membrane protein" evidence="1">
    <location>
        <begin position="9"/>
        <end position="29"/>
    </location>
</feature>
<feature type="topological domain" description="Periplasmic" evidence="1">
    <location>
        <begin position="30"/>
        <end position="128"/>
    </location>
</feature>
<feature type="binding site" description="covalent" evidence="1">
    <location>
        <position position="120"/>
    </location>
    <ligand>
        <name>heme</name>
        <dbReference type="ChEBI" id="CHEBI:30413"/>
    </ligand>
</feature>
<feature type="binding site" description="axial binding residue" evidence="1">
    <location>
        <position position="124"/>
    </location>
    <ligand>
        <name>heme</name>
        <dbReference type="ChEBI" id="CHEBI:30413"/>
    </ligand>
    <ligandPart>
        <name>Fe</name>
        <dbReference type="ChEBI" id="CHEBI:18248"/>
    </ligandPart>
</feature>
<protein>
    <recommendedName>
        <fullName evidence="1">Cytochrome c-type biogenesis protein CcmE</fullName>
    </recommendedName>
    <alternativeName>
        <fullName evidence="1">Cytochrome c maturation protein E</fullName>
    </alternativeName>
    <alternativeName>
        <fullName evidence="1">Heme chaperone CcmE</fullName>
    </alternativeName>
</protein>
<dbReference type="EMBL" id="AE006914">
    <property type="protein sequence ID" value="AAL03434.1"/>
    <property type="molecule type" value="Genomic_DNA"/>
</dbReference>
<dbReference type="PIR" id="H97811">
    <property type="entry name" value="H97811"/>
</dbReference>
<dbReference type="RefSeq" id="WP_010977498.1">
    <property type="nucleotide sequence ID" value="NC_003103.1"/>
</dbReference>
<dbReference type="SMR" id="Q92H75"/>
<dbReference type="GeneID" id="928864"/>
<dbReference type="KEGG" id="rco:RC0896"/>
<dbReference type="PATRIC" id="fig|272944.4.peg.1020"/>
<dbReference type="HOGENOM" id="CLU_079503_1_1_5"/>
<dbReference type="Proteomes" id="UP000000816">
    <property type="component" value="Chromosome"/>
</dbReference>
<dbReference type="GO" id="GO:0005886">
    <property type="term" value="C:plasma membrane"/>
    <property type="evidence" value="ECO:0007669"/>
    <property type="project" value="UniProtKB-SubCell"/>
</dbReference>
<dbReference type="GO" id="GO:0020037">
    <property type="term" value="F:heme binding"/>
    <property type="evidence" value="ECO:0007669"/>
    <property type="project" value="InterPro"/>
</dbReference>
<dbReference type="GO" id="GO:0046872">
    <property type="term" value="F:metal ion binding"/>
    <property type="evidence" value="ECO:0007669"/>
    <property type="project" value="UniProtKB-KW"/>
</dbReference>
<dbReference type="GO" id="GO:0017004">
    <property type="term" value="P:cytochrome complex assembly"/>
    <property type="evidence" value="ECO:0007669"/>
    <property type="project" value="UniProtKB-KW"/>
</dbReference>
<dbReference type="Gene3D" id="2.40.50.140">
    <property type="entry name" value="Nucleic acid-binding proteins"/>
    <property type="match status" value="1"/>
</dbReference>
<dbReference type="HAMAP" id="MF_01959">
    <property type="entry name" value="CcmE"/>
    <property type="match status" value="1"/>
</dbReference>
<dbReference type="InterPro" id="IPR004329">
    <property type="entry name" value="CcmE"/>
</dbReference>
<dbReference type="InterPro" id="IPR036127">
    <property type="entry name" value="CcmE-like_sf"/>
</dbReference>
<dbReference type="InterPro" id="IPR012340">
    <property type="entry name" value="NA-bd_OB-fold"/>
</dbReference>
<dbReference type="NCBIfam" id="NF009727">
    <property type="entry name" value="PRK13254.1-1"/>
    <property type="match status" value="1"/>
</dbReference>
<dbReference type="PANTHER" id="PTHR34128">
    <property type="entry name" value="CYTOCHROME C-TYPE BIOGENESIS PROTEIN CCME HOMOLOG, MITOCHONDRIAL"/>
    <property type="match status" value="1"/>
</dbReference>
<dbReference type="PANTHER" id="PTHR34128:SF2">
    <property type="entry name" value="CYTOCHROME C-TYPE BIOGENESIS PROTEIN CCME HOMOLOG, MITOCHONDRIAL"/>
    <property type="match status" value="1"/>
</dbReference>
<dbReference type="Pfam" id="PF03100">
    <property type="entry name" value="CcmE"/>
    <property type="match status" value="1"/>
</dbReference>
<dbReference type="SUPFAM" id="SSF82093">
    <property type="entry name" value="Heme chaperone CcmE"/>
    <property type="match status" value="1"/>
</dbReference>
<organism>
    <name type="scientific">Rickettsia conorii (strain ATCC VR-613 / Malish 7)</name>
    <dbReference type="NCBI Taxonomy" id="272944"/>
    <lineage>
        <taxon>Bacteria</taxon>
        <taxon>Pseudomonadati</taxon>
        <taxon>Pseudomonadota</taxon>
        <taxon>Alphaproteobacteria</taxon>
        <taxon>Rickettsiales</taxon>
        <taxon>Rickettsiaceae</taxon>
        <taxon>Rickettsieae</taxon>
        <taxon>Rickettsia</taxon>
        <taxon>spotted fever group</taxon>
    </lineage>
</organism>
<proteinExistence type="inferred from homology"/>
<gene>
    <name evidence="1" type="primary">ccmE</name>
    <name evidence="1" type="synonym">cycJ</name>
    <name type="ordered locus">RC0896</name>
</gene>
<reference key="1">
    <citation type="journal article" date="2001" name="Science">
        <title>Mechanisms of evolution in Rickettsia conorii and R. prowazekii.</title>
        <authorList>
            <person name="Ogata H."/>
            <person name="Audic S."/>
            <person name="Renesto-Audiffren P."/>
            <person name="Fournier P.-E."/>
            <person name="Barbe V."/>
            <person name="Samson D."/>
            <person name="Roux V."/>
            <person name="Cossart P."/>
            <person name="Weissenbach J."/>
            <person name="Claverie J.-M."/>
            <person name="Raoult D."/>
        </authorList>
    </citation>
    <scope>NUCLEOTIDE SEQUENCE [LARGE SCALE GENOMIC DNA]</scope>
    <source>
        <strain>ATCC VR-613 / Malish 7</strain>
    </source>
</reference>
<name>CCME_RICCN</name>
<evidence type="ECO:0000255" key="1">
    <source>
        <dbReference type="HAMAP-Rule" id="MF_01959"/>
    </source>
</evidence>
<comment type="function">
    <text evidence="1">Heme chaperone required for the biogenesis of c-type cytochromes. Transiently binds heme delivered by CcmC and transfers the heme to apo-cytochromes in a process facilitated by CcmF and CcmH.</text>
</comment>
<comment type="subcellular location">
    <subcellularLocation>
        <location evidence="1">Cell inner membrane</location>
        <topology evidence="1">Single-pass type II membrane protein</topology>
        <orientation evidence="1">Periplasmic side</orientation>
    </subcellularLocation>
</comment>
<comment type="similarity">
    <text evidence="1">Belongs to the CcmE/CycJ family.</text>
</comment>
<keyword id="KW-0997">Cell inner membrane</keyword>
<keyword id="KW-1003">Cell membrane</keyword>
<keyword id="KW-0201">Cytochrome c-type biogenesis</keyword>
<keyword id="KW-0349">Heme</keyword>
<keyword id="KW-0408">Iron</keyword>
<keyword id="KW-0472">Membrane</keyword>
<keyword id="KW-0479">Metal-binding</keyword>
<keyword id="KW-0735">Signal-anchor</keyword>
<keyword id="KW-0812">Transmembrane</keyword>
<keyword id="KW-1133">Transmembrane helix</keyword>
<sequence>MQKRVRNRLITIIICFCSACLGISIILYNLEKNIVFFLPPSKINEIEQGQELRVGGLVKTDSINKIADDKISFVITDNIKDCEILYQGALPALFRKGQGIIAIGQLSNGKFIARQLLAKHDENYRPPQ</sequence>